<evidence type="ECO:0000255" key="1">
    <source>
        <dbReference type="HAMAP-Rule" id="MF_00038"/>
    </source>
</evidence>
<sequence length="360" mass="39748">MLYWLAEYLQEYMRGFAVFQYLTVRAILSVLTALGISLLLGPWVIRRLTEMRIGQAVRSDGPQTHLSKSGTPTMGGALILSAMFISTLLWSDFGNRYVWVVLIVTAIFGAVGWVDDYRKVAKRDPKGLPARWKYFWQSIAGFGAAVFLFCTAQAPAETQLFIPFFKNVALNMGLFYIIFTYFVIVGTSNAVNLTDGLDGLAIMPSVMVAGALALIAYLAGHSQFAQYLHIAYIPGAGELAVFCCALVGAGLGFLWFNTYPAQVFMGDVGALALGAALGLVAVIVRHEFVLFIMGGIFVLETVSVILQVASFKLTGRRIFRMAPIHHHFELKGWPEPRVIVRFWIITLVLVLIGLATLKFR</sequence>
<accession>B3PCM3</accession>
<protein>
    <recommendedName>
        <fullName evidence="1">Phospho-N-acetylmuramoyl-pentapeptide-transferase</fullName>
        <ecNumber evidence="1">2.7.8.13</ecNumber>
    </recommendedName>
    <alternativeName>
        <fullName evidence="1">UDP-MurNAc-pentapeptide phosphotransferase</fullName>
    </alternativeName>
</protein>
<name>MRAY_CELJU</name>
<reference key="1">
    <citation type="journal article" date="2008" name="J. Bacteriol.">
        <title>Insights into plant cell wall degradation from the genome sequence of the soil bacterium Cellvibrio japonicus.</title>
        <authorList>
            <person name="DeBoy R.T."/>
            <person name="Mongodin E.F."/>
            <person name="Fouts D.E."/>
            <person name="Tailford L.E."/>
            <person name="Khouri H."/>
            <person name="Emerson J.B."/>
            <person name="Mohamoud Y."/>
            <person name="Watkins K."/>
            <person name="Henrissat B."/>
            <person name="Gilbert H.J."/>
            <person name="Nelson K.E."/>
        </authorList>
    </citation>
    <scope>NUCLEOTIDE SEQUENCE [LARGE SCALE GENOMIC DNA]</scope>
    <source>
        <strain>Ueda107</strain>
    </source>
</reference>
<dbReference type="EC" id="2.7.8.13" evidence="1"/>
<dbReference type="EMBL" id="CP000934">
    <property type="protein sequence ID" value="ACE82952.1"/>
    <property type="molecule type" value="Genomic_DNA"/>
</dbReference>
<dbReference type="RefSeq" id="WP_012488516.1">
    <property type="nucleotide sequence ID" value="NC_010995.1"/>
</dbReference>
<dbReference type="SMR" id="B3PCM3"/>
<dbReference type="STRING" id="498211.CJA_2932"/>
<dbReference type="KEGG" id="cja:CJA_2932"/>
<dbReference type="eggNOG" id="COG0472">
    <property type="taxonomic scope" value="Bacteria"/>
</dbReference>
<dbReference type="HOGENOM" id="CLU_023982_0_0_6"/>
<dbReference type="OrthoDB" id="9805475at2"/>
<dbReference type="UniPathway" id="UPA00219"/>
<dbReference type="Proteomes" id="UP000001036">
    <property type="component" value="Chromosome"/>
</dbReference>
<dbReference type="GO" id="GO:0005886">
    <property type="term" value="C:plasma membrane"/>
    <property type="evidence" value="ECO:0007669"/>
    <property type="project" value="UniProtKB-SubCell"/>
</dbReference>
<dbReference type="GO" id="GO:0046872">
    <property type="term" value="F:metal ion binding"/>
    <property type="evidence" value="ECO:0007669"/>
    <property type="project" value="UniProtKB-KW"/>
</dbReference>
<dbReference type="GO" id="GO:0008963">
    <property type="term" value="F:phospho-N-acetylmuramoyl-pentapeptide-transferase activity"/>
    <property type="evidence" value="ECO:0007669"/>
    <property type="project" value="UniProtKB-UniRule"/>
</dbReference>
<dbReference type="GO" id="GO:0051992">
    <property type="term" value="F:UDP-N-acetylmuramoyl-L-alanyl-D-glutamyl-meso-2,6-diaminopimelyl-D-alanyl-D-alanine:undecaprenyl-phosphate transferase activity"/>
    <property type="evidence" value="ECO:0007669"/>
    <property type="project" value="RHEA"/>
</dbReference>
<dbReference type="GO" id="GO:0051301">
    <property type="term" value="P:cell division"/>
    <property type="evidence" value="ECO:0007669"/>
    <property type="project" value="UniProtKB-KW"/>
</dbReference>
<dbReference type="GO" id="GO:0071555">
    <property type="term" value="P:cell wall organization"/>
    <property type="evidence" value="ECO:0007669"/>
    <property type="project" value="UniProtKB-KW"/>
</dbReference>
<dbReference type="GO" id="GO:0009252">
    <property type="term" value="P:peptidoglycan biosynthetic process"/>
    <property type="evidence" value="ECO:0007669"/>
    <property type="project" value="UniProtKB-UniRule"/>
</dbReference>
<dbReference type="GO" id="GO:0008360">
    <property type="term" value="P:regulation of cell shape"/>
    <property type="evidence" value="ECO:0007669"/>
    <property type="project" value="UniProtKB-KW"/>
</dbReference>
<dbReference type="CDD" id="cd06852">
    <property type="entry name" value="GT_MraY"/>
    <property type="match status" value="1"/>
</dbReference>
<dbReference type="HAMAP" id="MF_00038">
    <property type="entry name" value="MraY"/>
    <property type="match status" value="1"/>
</dbReference>
<dbReference type="InterPro" id="IPR000715">
    <property type="entry name" value="Glycosyl_transferase_4"/>
</dbReference>
<dbReference type="InterPro" id="IPR003524">
    <property type="entry name" value="PNAcMuramoyl-5peptid_Trfase"/>
</dbReference>
<dbReference type="InterPro" id="IPR018480">
    <property type="entry name" value="PNAcMuramoyl-5peptid_Trfase_CS"/>
</dbReference>
<dbReference type="NCBIfam" id="TIGR00445">
    <property type="entry name" value="mraY"/>
    <property type="match status" value="1"/>
</dbReference>
<dbReference type="PANTHER" id="PTHR22926">
    <property type="entry name" value="PHOSPHO-N-ACETYLMURAMOYL-PENTAPEPTIDE-TRANSFERASE"/>
    <property type="match status" value="1"/>
</dbReference>
<dbReference type="PANTHER" id="PTHR22926:SF5">
    <property type="entry name" value="PHOSPHO-N-ACETYLMURAMOYL-PENTAPEPTIDE-TRANSFERASE HOMOLOG"/>
    <property type="match status" value="1"/>
</dbReference>
<dbReference type="Pfam" id="PF00953">
    <property type="entry name" value="Glycos_transf_4"/>
    <property type="match status" value="1"/>
</dbReference>
<dbReference type="Pfam" id="PF10555">
    <property type="entry name" value="MraY_sig1"/>
    <property type="match status" value="1"/>
</dbReference>
<dbReference type="PROSITE" id="PS01347">
    <property type="entry name" value="MRAY_1"/>
    <property type="match status" value="1"/>
</dbReference>
<dbReference type="PROSITE" id="PS01348">
    <property type="entry name" value="MRAY_2"/>
    <property type="match status" value="1"/>
</dbReference>
<gene>
    <name evidence="1" type="primary">mraY</name>
    <name type="ordered locus">CJA_2932</name>
</gene>
<organism>
    <name type="scientific">Cellvibrio japonicus (strain Ueda107)</name>
    <name type="common">Pseudomonas fluorescens subsp. cellulosa</name>
    <dbReference type="NCBI Taxonomy" id="498211"/>
    <lineage>
        <taxon>Bacteria</taxon>
        <taxon>Pseudomonadati</taxon>
        <taxon>Pseudomonadota</taxon>
        <taxon>Gammaproteobacteria</taxon>
        <taxon>Cellvibrionales</taxon>
        <taxon>Cellvibrionaceae</taxon>
        <taxon>Cellvibrio</taxon>
    </lineage>
</organism>
<keyword id="KW-0131">Cell cycle</keyword>
<keyword id="KW-0132">Cell division</keyword>
<keyword id="KW-0997">Cell inner membrane</keyword>
<keyword id="KW-1003">Cell membrane</keyword>
<keyword id="KW-0133">Cell shape</keyword>
<keyword id="KW-0961">Cell wall biogenesis/degradation</keyword>
<keyword id="KW-0460">Magnesium</keyword>
<keyword id="KW-0472">Membrane</keyword>
<keyword id="KW-0479">Metal-binding</keyword>
<keyword id="KW-0573">Peptidoglycan synthesis</keyword>
<keyword id="KW-1185">Reference proteome</keyword>
<keyword id="KW-0808">Transferase</keyword>
<keyword id="KW-0812">Transmembrane</keyword>
<keyword id="KW-1133">Transmembrane helix</keyword>
<comment type="function">
    <text evidence="1">Catalyzes the initial step of the lipid cycle reactions in the biosynthesis of the cell wall peptidoglycan: transfers peptidoglycan precursor phospho-MurNAc-pentapeptide from UDP-MurNAc-pentapeptide onto the lipid carrier undecaprenyl phosphate, yielding undecaprenyl-pyrophosphoryl-MurNAc-pentapeptide, known as lipid I.</text>
</comment>
<comment type="catalytic activity">
    <reaction evidence="1">
        <text>UDP-N-acetyl-alpha-D-muramoyl-L-alanyl-gamma-D-glutamyl-meso-2,6-diaminopimeloyl-D-alanyl-D-alanine + di-trans,octa-cis-undecaprenyl phosphate = di-trans,octa-cis-undecaprenyl diphospho-N-acetyl-alpha-D-muramoyl-L-alanyl-D-glutamyl-meso-2,6-diaminopimeloyl-D-alanyl-D-alanine + UMP</text>
        <dbReference type="Rhea" id="RHEA:28386"/>
        <dbReference type="ChEBI" id="CHEBI:57865"/>
        <dbReference type="ChEBI" id="CHEBI:60392"/>
        <dbReference type="ChEBI" id="CHEBI:61386"/>
        <dbReference type="ChEBI" id="CHEBI:61387"/>
        <dbReference type="EC" id="2.7.8.13"/>
    </reaction>
</comment>
<comment type="cofactor">
    <cofactor evidence="1">
        <name>Mg(2+)</name>
        <dbReference type="ChEBI" id="CHEBI:18420"/>
    </cofactor>
</comment>
<comment type="pathway">
    <text evidence="1">Cell wall biogenesis; peptidoglycan biosynthesis.</text>
</comment>
<comment type="subcellular location">
    <subcellularLocation>
        <location evidence="1">Cell inner membrane</location>
        <topology evidence="1">Multi-pass membrane protein</topology>
    </subcellularLocation>
</comment>
<comment type="similarity">
    <text evidence="1">Belongs to the glycosyltransferase 4 family. MraY subfamily.</text>
</comment>
<feature type="chain" id="PRO_1000090605" description="Phospho-N-acetylmuramoyl-pentapeptide-transferase">
    <location>
        <begin position="1"/>
        <end position="360"/>
    </location>
</feature>
<feature type="transmembrane region" description="Helical" evidence="1">
    <location>
        <begin position="25"/>
        <end position="45"/>
    </location>
</feature>
<feature type="transmembrane region" description="Helical" evidence="1">
    <location>
        <begin position="74"/>
        <end position="94"/>
    </location>
</feature>
<feature type="transmembrane region" description="Helical" evidence="1">
    <location>
        <begin position="97"/>
        <end position="117"/>
    </location>
</feature>
<feature type="transmembrane region" description="Helical" evidence="1">
    <location>
        <begin position="134"/>
        <end position="154"/>
    </location>
</feature>
<feature type="transmembrane region" description="Helical" evidence="1">
    <location>
        <begin position="168"/>
        <end position="188"/>
    </location>
</feature>
<feature type="transmembrane region" description="Helical" evidence="1">
    <location>
        <begin position="199"/>
        <end position="219"/>
    </location>
</feature>
<feature type="transmembrane region" description="Helical" evidence="1">
    <location>
        <begin position="236"/>
        <end position="256"/>
    </location>
</feature>
<feature type="transmembrane region" description="Helical" evidence="1">
    <location>
        <begin position="263"/>
        <end position="283"/>
    </location>
</feature>
<feature type="transmembrane region" description="Helical" evidence="1">
    <location>
        <begin position="288"/>
        <end position="308"/>
    </location>
</feature>
<feature type="transmembrane region" description="Helical" evidence="1">
    <location>
        <begin position="339"/>
        <end position="359"/>
    </location>
</feature>
<proteinExistence type="inferred from homology"/>